<organism>
    <name type="scientific">Saccharomyces cerevisiae (strain ATCC 204508 / S288c)</name>
    <name type="common">Baker's yeast</name>
    <dbReference type="NCBI Taxonomy" id="559292"/>
    <lineage>
        <taxon>Eukaryota</taxon>
        <taxon>Fungi</taxon>
        <taxon>Dikarya</taxon>
        <taxon>Ascomycota</taxon>
        <taxon>Saccharomycotina</taxon>
        <taxon>Saccharomycetes</taxon>
        <taxon>Saccharomycetales</taxon>
        <taxon>Saccharomycetaceae</taxon>
        <taxon>Saccharomyces</taxon>
    </lineage>
</organism>
<dbReference type="EMBL" id="U13999">
    <property type="protein sequence ID" value="AAA65234.1"/>
    <property type="molecule type" value="Genomic_DNA"/>
</dbReference>
<dbReference type="EMBL" id="D50617">
    <property type="protein sequence ID" value="BAA09235.1"/>
    <property type="molecule type" value="Genomic_DNA"/>
</dbReference>
<dbReference type="EMBL" id="BK006940">
    <property type="protein sequence ID" value="DAA12436.1"/>
    <property type="molecule type" value="Genomic_DNA"/>
</dbReference>
<dbReference type="PIR" id="A55201">
    <property type="entry name" value="A55201"/>
</dbReference>
<dbReference type="RefSeq" id="NP_116652.1">
    <property type="nucleotide sequence ID" value="NM_001179963.1"/>
</dbReference>
<dbReference type="SMR" id="P40965"/>
<dbReference type="BioGRID" id="31143">
    <property type="interactions" value="289"/>
</dbReference>
<dbReference type="ComplexPortal" id="CPX-1704">
    <property type="entry name" value="MutSgamma meiotic recombination complex"/>
</dbReference>
<dbReference type="DIP" id="DIP-2426N"/>
<dbReference type="FunCoup" id="P40965">
    <property type="interactions" value="475"/>
</dbReference>
<dbReference type="IntAct" id="P40965">
    <property type="interactions" value="5"/>
</dbReference>
<dbReference type="MINT" id="P40965"/>
<dbReference type="STRING" id="4932.YFL003C"/>
<dbReference type="iPTMnet" id="P40965"/>
<dbReference type="PaxDb" id="4932-YFL003C"/>
<dbReference type="PeptideAtlas" id="P40965"/>
<dbReference type="EnsemblFungi" id="YFL003C_mRNA">
    <property type="protein sequence ID" value="YFL003C"/>
    <property type="gene ID" value="YFL003C"/>
</dbReference>
<dbReference type="GeneID" id="850545"/>
<dbReference type="KEGG" id="sce:YFL003C"/>
<dbReference type="AGR" id="SGD:S000001891"/>
<dbReference type="SGD" id="S000001891">
    <property type="gene designation" value="MSH4"/>
</dbReference>
<dbReference type="VEuPathDB" id="FungiDB:YFL003C"/>
<dbReference type="eggNOG" id="KOG0220">
    <property type="taxonomic scope" value="Eukaryota"/>
</dbReference>
<dbReference type="GeneTree" id="ENSGT00550000074897"/>
<dbReference type="HOGENOM" id="CLU_002472_7_3_1"/>
<dbReference type="InParanoid" id="P40965"/>
<dbReference type="OMA" id="KMTMLYK"/>
<dbReference type="OrthoDB" id="276261at2759"/>
<dbReference type="BioCyc" id="YEAST:G3O-30451-MONOMER"/>
<dbReference type="BioGRID-ORCS" id="850545">
    <property type="hits" value="1 hit in 10 CRISPR screens"/>
</dbReference>
<dbReference type="PRO" id="PR:P40965"/>
<dbReference type="Proteomes" id="UP000002311">
    <property type="component" value="Chromosome VI"/>
</dbReference>
<dbReference type="RNAct" id="P40965">
    <property type="molecule type" value="protein"/>
</dbReference>
<dbReference type="GO" id="GO:1990391">
    <property type="term" value="C:DNA repair complex"/>
    <property type="evidence" value="ECO:0000353"/>
    <property type="project" value="ComplexPortal"/>
</dbReference>
<dbReference type="GO" id="GO:0062128">
    <property type="term" value="C:MutSgamma complex"/>
    <property type="evidence" value="ECO:0000353"/>
    <property type="project" value="SGD"/>
</dbReference>
<dbReference type="GO" id="GO:0000228">
    <property type="term" value="C:nuclear chromosome"/>
    <property type="evidence" value="ECO:0000314"/>
    <property type="project" value="SGD"/>
</dbReference>
<dbReference type="GO" id="GO:0005634">
    <property type="term" value="C:nucleus"/>
    <property type="evidence" value="ECO:0000318"/>
    <property type="project" value="GO_Central"/>
</dbReference>
<dbReference type="GO" id="GO:0005524">
    <property type="term" value="F:ATP binding"/>
    <property type="evidence" value="ECO:0007669"/>
    <property type="project" value="UniProtKB-KW"/>
</dbReference>
<dbReference type="GO" id="GO:0140664">
    <property type="term" value="F:ATP-dependent DNA damage sensor activity"/>
    <property type="evidence" value="ECO:0007669"/>
    <property type="project" value="InterPro"/>
</dbReference>
<dbReference type="GO" id="GO:0030983">
    <property type="term" value="F:mismatched DNA binding"/>
    <property type="evidence" value="ECO:0007669"/>
    <property type="project" value="InterPro"/>
</dbReference>
<dbReference type="GO" id="GO:0007131">
    <property type="term" value="P:reciprocal meiotic recombination"/>
    <property type="evidence" value="ECO:0000315"/>
    <property type="project" value="SGD"/>
</dbReference>
<dbReference type="CDD" id="cd03282">
    <property type="entry name" value="ABC_MSH4_euk"/>
    <property type="match status" value="1"/>
</dbReference>
<dbReference type="FunFam" id="3.30.420.110:FF:000025">
    <property type="entry name" value="Msh4p"/>
    <property type="match status" value="1"/>
</dbReference>
<dbReference type="Gene3D" id="1.10.1420.10">
    <property type="match status" value="2"/>
</dbReference>
<dbReference type="Gene3D" id="3.30.420.110">
    <property type="entry name" value="MutS, connector domain"/>
    <property type="match status" value="1"/>
</dbReference>
<dbReference type="Gene3D" id="3.40.50.300">
    <property type="entry name" value="P-loop containing nucleotide triphosphate hydrolases"/>
    <property type="match status" value="1"/>
</dbReference>
<dbReference type="InterPro" id="IPR011184">
    <property type="entry name" value="DNA_mismatch_repair_Msh2"/>
</dbReference>
<dbReference type="InterPro" id="IPR000432">
    <property type="entry name" value="DNA_mismatch_repair_MutS_C"/>
</dbReference>
<dbReference type="InterPro" id="IPR007861">
    <property type="entry name" value="DNA_mismatch_repair_MutS_clamp"/>
</dbReference>
<dbReference type="InterPro" id="IPR007696">
    <property type="entry name" value="DNA_mismatch_repair_MutS_core"/>
</dbReference>
<dbReference type="InterPro" id="IPR036187">
    <property type="entry name" value="DNA_mismatch_repair_MutS_sf"/>
</dbReference>
<dbReference type="InterPro" id="IPR007860">
    <property type="entry name" value="DNA_mmatch_repair_MutS_con_dom"/>
</dbReference>
<dbReference type="InterPro" id="IPR045076">
    <property type="entry name" value="MutS"/>
</dbReference>
<dbReference type="InterPro" id="IPR036678">
    <property type="entry name" value="MutS_con_dom_sf"/>
</dbReference>
<dbReference type="InterPro" id="IPR027417">
    <property type="entry name" value="P-loop_NTPase"/>
</dbReference>
<dbReference type="PANTHER" id="PTHR11361">
    <property type="entry name" value="DNA MISMATCH REPAIR PROTEIN MUTS FAMILY MEMBER"/>
    <property type="match status" value="1"/>
</dbReference>
<dbReference type="PANTHER" id="PTHR11361:SF21">
    <property type="entry name" value="MUTS PROTEIN HOMOLOG 4"/>
    <property type="match status" value="1"/>
</dbReference>
<dbReference type="Pfam" id="PF05188">
    <property type="entry name" value="MutS_II"/>
    <property type="match status" value="1"/>
</dbReference>
<dbReference type="Pfam" id="PF05192">
    <property type="entry name" value="MutS_III"/>
    <property type="match status" value="1"/>
</dbReference>
<dbReference type="Pfam" id="PF05190">
    <property type="entry name" value="MutS_IV"/>
    <property type="match status" value="1"/>
</dbReference>
<dbReference type="Pfam" id="PF00488">
    <property type="entry name" value="MutS_V"/>
    <property type="match status" value="1"/>
</dbReference>
<dbReference type="PIRSF" id="PIRSF005813">
    <property type="entry name" value="MSH2"/>
    <property type="match status" value="1"/>
</dbReference>
<dbReference type="SMART" id="SM00534">
    <property type="entry name" value="MUTSac"/>
    <property type="match status" value="1"/>
</dbReference>
<dbReference type="SMART" id="SM00533">
    <property type="entry name" value="MUTSd"/>
    <property type="match status" value="1"/>
</dbReference>
<dbReference type="SUPFAM" id="SSF53150">
    <property type="entry name" value="DNA repair protein MutS, domain II"/>
    <property type="match status" value="1"/>
</dbReference>
<dbReference type="SUPFAM" id="SSF48334">
    <property type="entry name" value="DNA repair protein MutS, domain III"/>
    <property type="match status" value="1"/>
</dbReference>
<dbReference type="SUPFAM" id="SSF52540">
    <property type="entry name" value="P-loop containing nucleoside triphosphate hydrolases"/>
    <property type="match status" value="1"/>
</dbReference>
<dbReference type="PROSITE" id="PS00486">
    <property type="entry name" value="DNA_MISMATCH_REPAIR_2"/>
    <property type="match status" value="1"/>
</dbReference>
<comment type="function">
    <text>Involved in meiotic recombination. Facilitate crossovers between homologs during meiosis.</text>
</comment>
<comment type="subunit">
    <text evidence="3">Heterooligomer of MSH4 and MSH5.</text>
</comment>
<comment type="interaction">
    <interactant intactId="EBI-11371">
        <id>P40965</id>
    </interactant>
    <interactant intactId="EBI-11377">
        <id>Q12175</id>
        <label>MSH5</label>
    </interactant>
    <organismsDiffer>false</organismsDiffer>
    <experiments>2</experiments>
</comment>
<comment type="miscellaneous">
    <text>Two distinct classes of crossovers have been demonstrated in budding yeast. Class I is MSH4/MSH5 dependent and exhibits crossover interference. Class II is MUS81/MMS4 dependent and exhibits no interference.</text>
</comment>
<comment type="similarity">
    <text evidence="4">Belongs to the DNA mismatch repair MutS family.</text>
</comment>
<accession>P40965</accession>
<accession>D6VTM6</accession>
<evidence type="ECO:0000255" key="1"/>
<evidence type="ECO:0000256" key="2">
    <source>
        <dbReference type="SAM" id="MobiDB-lite"/>
    </source>
</evidence>
<evidence type="ECO:0000269" key="3">
    <source>
    </source>
</evidence>
<evidence type="ECO:0000305" key="4"/>
<proteinExistence type="evidence at protein level"/>
<sequence>MSESNLSSFISTNYFNLRSAANSSNSISKPSTKKSIRNQKSPTNISSWALKKKTLQIAETTWENNEKDSTHSHYLMTGSMASRTATSLSRYSTNASLLGPSIDCVLCCIYEVPRDISTRIGLCIINCNTGQMYLSDFMDSQIYIRVVHKLQIYQPTEILIPSSSLAPTVSKLATMIKFNVAETVKIEEGSRKCFNSQDGLAAITKYLMDDTKKDLKIEEIIDKTFALCAASAAISYMEEIISKSSRNLNAFRKLRIQFEGTENTMLIDSKTVRGLELVENKLDKNGISLWKFLDTTSTKMGQRSLRNSILQPLTDRGSIEMRLEALEELKANDDLLQKLRLEMKSLPDLDKLFSRLLCINHSAIKPDQRINYVLLLKETLQSVKSLKDALNDQLIQSRLISETKKIFNNDAIMEIEKLINSCINEDCVWASSAIQLLNQRSYAVKSDSNGLLDVSRQIYKEVKEEFFREVEDLTAKNKINLDHNYDSARGFYLRIKRQEFTDDVATLPDVFISRTIKKNYIECTTLNIIKKNARLKEVMEEILLLSEETVDELLDKIATHISELFMIAEAVAILDLVCSFTYNLKENNYTIPIFTNNLLIRDSRHPLLEKVLKNFVPNTISSTKHSSSLQIITGCNMSGKSVYLKQVALICIMAQMGSGIPALYGSFPVFKRLHARVCNDSMELTSSNFGFEMKEMAYFLDDINTETLLILDELGRGSSIADGFCVSLAVTEHLLRTEATVFLSTHFQDIPKIMSKKPAVSHLHMDAVLLNDNSVKMNYQLTQKSVAIENSGIRVVKKIFNPDIIAEAYNIHSLLKIAKARTENEDSNGVVDQKTINQMKRIHNLVAILKECAGNEKEPLTLGKLKEINSDFIENFEE</sequence>
<feature type="chain" id="PRO_0000115201" description="MutS protein homolog 4">
    <location>
        <begin position="1"/>
        <end position="878"/>
    </location>
</feature>
<feature type="region of interest" description="Disordered" evidence="2">
    <location>
        <begin position="22"/>
        <end position="41"/>
    </location>
</feature>
<feature type="binding site" evidence="1">
    <location>
        <begin position="634"/>
        <end position="641"/>
    </location>
    <ligand>
        <name>ATP</name>
        <dbReference type="ChEBI" id="CHEBI:30616"/>
    </ligand>
</feature>
<feature type="sequence conflict" description="In Ref. 1; AAA65234." evidence="4" ref="1">
    <original>IH</original>
    <variation>MD</variation>
    <location>
        <begin position="811"/>
        <end position="812"/>
    </location>
</feature>
<protein>
    <recommendedName>
        <fullName>MutS protein homolog 4</fullName>
    </recommendedName>
</protein>
<name>MSH4_YEAST</name>
<gene>
    <name type="primary">MSH4</name>
    <name type="ordered locus">YFL003C</name>
</gene>
<keyword id="KW-0067">ATP-binding</keyword>
<keyword id="KW-0238">DNA-binding</keyword>
<keyword id="KW-0469">Meiosis</keyword>
<keyword id="KW-0547">Nucleotide-binding</keyword>
<keyword id="KW-1185">Reference proteome</keyword>
<reference key="1">
    <citation type="journal article" date="1994" name="Cell">
        <title>Mutation of a meiosis-specific MutS homolog decreases crossing over but not mismatch correction.</title>
        <authorList>
            <person name="Ross-Macdonald P."/>
            <person name="Roeder G.S."/>
        </authorList>
    </citation>
    <scope>NUCLEOTIDE SEQUENCE [GENOMIC DNA]</scope>
</reference>
<reference key="2">
    <citation type="journal article" date="1995" name="Nat. Genet.">
        <title>Analysis of the nucleotide sequence of chromosome VI from Saccharomyces cerevisiae.</title>
        <authorList>
            <person name="Murakami Y."/>
            <person name="Naitou M."/>
            <person name="Hagiwara H."/>
            <person name="Shibata T."/>
            <person name="Ozawa M."/>
            <person name="Sasanuma S."/>
            <person name="Sasanuma M."/>
            <person name="Tsuchiya Y."/>
            <person name="Soeda E."/>
            <person name="Yokoyama K."/>
            <person name="Yamazaki M."/>
            <person name="Tashiro H."/>
            <person name="Eki T."/>
        </authorList>
    </citation>
    <scope>NUCLEOTIDE SEQUENCE [LARGE SCALE GENOMIC DNA]</scope>
    <source>
        <strain>ATCC 204508 / S288c</strain>
    </source>
</reference>
<reference key="3">
    <citation type="journal article" date="2014" name="G3 (Bethesda)">
        <title>The reference genome sequence of Saccharomyces cerevisiae: Then and now.</title>
        <authorList>
            <person name="Engel S.R."/>
            <person name="Dietrich F.S."/>
            <person name="Fisk D.G."/>
            <person name="Binkley G."/>
            <person name="Balakrishnan R."/>
            <person name="Costanzo M.C."/>
            <person name="Dwight S.S."/>
            <person name="Hitz B.C."/>
            <person name="Karra K."/>
            <person name="Nash R.S."/>
            <person name="Weng S."/>
            <person name="Wong E.D."/>
            <person name="Lloyd P."/>
            <person name="Skrzypek M.S."/>
            <person name="Miyasato S.R."/>
            <person name="Simison M."/>
            <person name="Cherry J.M."/>
        </authorList>
    </citation>
    <scope>GENOME REANNOTATION</scope>
    <source>
        <strain>ATCC 204508 / S288c</strain>
    </source>
</reference>
<reference key="4">
    <citation type="journal article" date="1996" name="Yeast">
        <title>Sequencing of a 23 kb fragment from Saccharomyces cerevisiae chromosome VI.</title>
        <authorList>
            <person name="Naitou M."/>
            <person name="Ozawa M."/>
            <person name="Sasanuma S."/>
            <person name="Kobayashi M."/>
            <person name="Hagiwara H."/>
            <person name="Shibata T."/>
            <person name="Hanaoka F."/>
            <person name="Watanabe K."/>
            <person name="Ono A."/>
            <person name="Yamazaki M."/>
            <person name="Tashiro H."/>
            <person name="Eki T."/>
            <person name="Murakami Y."/>
        </authorList>
    </citation>
    <scope>NUCLEOTIDE SEQUENCE [GENOMIC DNA]</scope>
    <source>
        <strain>ATCC 204511 / S288c / AB972</strain>
    </source>
</reference>
<reference key="5">
    <citation type="journal article" date="1997" name="J. Biol. Chem.">
        <title>Conserved properties between functionally distinct MutS homologs in yeast.</title>
        <authorList>
            <person name="Pochart P."/>
            <person name="Woltering D."/>
            <person name="Hollingsworth N.M."/>
        </authorList>
    </citation>
    <scope>INTERACTION WITH MSH5</scope>
</reference>